<dbReference type="EMBL" id="M92325">
    <property type="protein sequence ID" value="AAA30173.1"/>
    <property type="molecule type" value="Genomic_DNA"/>
</dbReference>
<dbReference type="EMBL" id="AJ000080">
    <property type="protein sequence ID" value="CAA03906.1"/>
    <property type="molecule type" value="Genomic_DNA"/>
</dbReference>
<dbReference type="EMBL" id="AJ250726">
    <property type="protein sequence ID" value="CAB60084.1"/>
    <property type="molecule type" value="Genomic_DNA"/>
</dbReference>
<dbReference type="SMR" id="P31543"/>
<dbReference type="MEROPS" id="X20.001"/>
<dbReference type="GO" id="GO:0005737">
    <property type="term" value="C:cytoplasm"/>
    <property type="evidence" value="ECO:0007669"/>
    <property type="project" value="TreeGrafter"/>
</dbReference>
<dbReference type="GO" id="GO:0005524">
    <property type="term" value="F:ATP binding"/>
    <property type="evidence" value="ECO:0007669"/>
    <property type="project" value="UniProtKB-KW"/>
</dbReference>
<dbReference type="GO" id="GO:0016887">
    <property type="term" value="F:ATP hydrolysis activity"/>
    <property type="evidence" value="ECO:0007669"/>
    <property type="project" value="InterPro"/>
</dbReference>
<dbReference type="GO" id="GO:0034605">
    <property type="term" value="P:cellular response to heat"/>
    <property type="evidence" value="ECO:0007669"/>
    <property type="project" value="TreeGrafter"/>
</dbReference>
<dbReference type="CDD" id="cd00009">
    <property type="entry name" value="AAA"/>
    <property type="match status" value="1"/>
</dbReference>
<dbReference type="CDD" id="cd19499">
    <property type="entry name" value="RecA-like_ClpB_Hsp104-like"/>
    <property type="match status" value="1"/>
</dbReference>
<dbReference type="FunFam" id="3.40.50.300:FF:000120">
    <property type="entry name" value="ATP-dependent chaperone ClpB"/>
    <property type="match status" value="1"/>
</dbReference>
<dbReference type="FunFam" id="3.40.50.300:FF:000025">
    <property type="entry name" value="ATP-dependent Clp protease subunit"/>
    <property type="match status" value="1"/>
</dbReference>
<dbReference type="FunFam" id="3.40.50.300:FF:000010">
    <property type="entry name" value="Chaperone clpB 1, putative"/>
    <property type="match status" value="1"/>
</dbReference>
<dbReference type="Gene3D" id="1.10.8.60">
    <property type="match status" value="1"/>
</dbReference>
<dbReference type="Gene3D" id="1.10.1780.10">
    <property type="entry name" value="Clp, N-terminal domain"/>
    <property type="match status" value="1"/>
</dbReference>
<dbReference type="Gene3D" id="3.40.50.300">
    <property type="entry name" value="P-loop containing nucleotide triphosphate hydrolases"/>
    <property type="match status" value="3"/>
</dbReference>
<dbReference type="InterPro" id="IPR003593">
    <property type="entry name" value="AAA+_ATPase"/>
</dbReference>
<dbReference type="InterPro" id="IPR003959">
    <property type="entry name" value="ATPase_AAA_core"/>
</dbReference>
<dbReference type="InterPro" id="IPR019489">
    <property type="entry name" value="Clp_ATPase_C"/>
</dbReference>
<dbReference type="InterPro" id="IPR036628">
    <property type="entry name" value="Clp_N_dom_sf"/>
</dbReference>
<dbReference type="InterPro" id="IPR004176">
    <property type="entry name" value="Clp_R_dom"/>
</dbReference>
<dbReference type="InterPro" id="IPR001270">
    <property type="entry name" value="ClpA/B"/>
</dbReference>
<dbReference type="InterPro" id="IPR018368">
    <property type="entry name" value="ClpA/B_CS1"/>
</dbReference>
<dbReference type="InterPro" id="IPR028299">
    <property type="entry name" value="ClpA/B_CS2"/>
</dbReference>
<dbReference type="InterPro" id="IPR041546">
    <property type="entry name" value="ClpA/ClpB_AAA_lid"/>
</dbReference>
<dbReference type="InterPro" id="IPR050130">
    <property type="entry name" value="ClpA_ClpB"/>
</dbReference>
<dbReference type="InterPro" id="IPR027417">
    <property type="entry name" value="P-loop_NTPase"/>
</dbReference>
<dbReference type="PANTHER" id="PTHR11638">
    <property type="entry name" value="ATP-DEPENDENT CLP PROTEASE"/>
    <property type="match status" value="1"/>
</dbReference>
<dbReference type="PANTHER" id="PTHR11638:SF18">
    <property type="entry name" value="HEAT SHOCK PROTEIN 104"/>
    <property type="match status" value="1"/>
</dbReference>
<dbReference type="Pfam" id="PF00004">
    <property type="entry name" value="AAA"/>
    <property type="match status" value="1"/>
</dbReference>
<dbReference type="Pfam" id="PF07724">
    <property type="entry name" value="AAA_2"/>
    <property type="match status" value="1"/>
</dbReference>
<dbReference type="Pfam" id="PF17871">
    <property type="entry name" value="AAA_lid_9"/>
    <property type="match status" value="1"/>
</dbReference>
<dbReference type="Pfam" id="PF02861">
    <property type="entry name" value="Clp_N"/>
    <property type="match status" value="2"/>
</dbReference>
<dbReference type="Pfam" id="PF10431">
    <property type="entry name" value="ClpB_D2-small"/>
    <property type="match status" value="1"/>
</dbReference>
<dbReference type="PRINTS" id="PR00300">
    <property type="entry name" value="CLPPROTEASEA"/>
</dbReference>
<dbReference type="SMART" id="SM00382">
    <property type="entry name" value="AAA"/>
    <property type="match status" value="2"/>
</dbReference>
<dbReference type="SMART" id="SM01086">
    <property type="entry name" value="ClpB_D2-small"/>
    <property type="match status" value="1"/>
</dbReference>
<dbReference type="SUPFAM" id="SSF81923">
    <property type="entry name" value="Double Clp-N motif"/>
    <property type="match status" value="1"/>
</dbReference>
<dbReference type="SUPFAM" id="SSF52540">
    <property type="entry name" value="P-loop containing nucleoside triphosphate hydrolases"/>
    <property type="match status" value="2"/>
</dbReference>
<dbReference type="PROSITE" id="PS51903">
    <property type="entry name" value="CLP_R"/>
    <property type="match status" value="1"/>
</dbReference>
<dbReference type="PROSITE" id="PS00870">
    <property type="entry name" value="CLPAB_1"/>
    <property type="match status" value="1"/>
</dbReference>
<dbReference type="PROSITE" id="PS00871">
    <property type="entry name" value="CLPAB_2"/>
    <property type="match status" value="1"/>
</dbReference>
<feature type="chain" id="PRO_0000191222" description="Heat shock protein 100">
    <location>
        <begin position="1"/>
        <end position="868"/>
    </location>
</feature>
<feature type="domain" description="Clp R" evidence="2">
    <location>
        <begin position="4"/>
        <end position="144"/>
    </location>
</feature>
<feature type="region of interest" description="Repeat 1" evidence="2">
    <location>
        <begin position="8"/>
        <end position="75"/>
    </location>
</feature>
<feature type="region of interest" description="Repeat 2" evidence="2">
    <location>
        <begin position="83"/>
        <end position="144"/>
    </location>
</feature>
<feature type="region of interest" description="I">
    <location>
        <begin position="159"/>
        <end position="407"/>
    </location>
</feature>
<feature type="region of interest" description="II">
    <location>
        <begin position="529"/>
        <end position="720"/>
    </location>
</feature>
<feature type="binding site" evidence="1">
    <location>
        <begin position="204"/>
        <end position="211"/>
    </location>
    <ligand>
        <name>ATP</name>
        <dbReference type="ChEBI" id="CHEBI:30616"/>
    </ligand>
</feature>
<feature type="binding site" evidence="1">
    <location>
        <begin position="603"/>
        <end position="610"/>
    </location>
    <ligand>
        <name>ATP</name>
        <dbReference type="ChEBI" id="CHEBI:30616"/>
    </ligand>
</feature>
<sequence length="868" mass="96905">MAHSDRQCTNAAQTALSDAVESARKHNNGFVDPAHLALVLFKNEDGLASRVLRKLNAGTVLEPLAARVGALPEQRPRPRSITFSSDGGCAQHRRAEANRVGDSLIAVDHLLIGLFECKEVEAIMKAAHASKKAVEGALLELRKGKKVTSEFQEENYQALEKYATDLCKLAEEGKLDPVIGRTDEVLRTIRVLSRRTKNNPILIGEPGVGKTAIAEGIAQRIVRGDVPDTLLNTRLFSLDLGALIAGSSLRGEFEERLKSVLNEVKESSNGVILFIDEIHLVLGAGKSGGSMDAANLLKPMLARGELRTIGATTLEEYRTYVEKDAAFERRFMPVYVTEPSVEECISILRGLKDRYEAHHGVQITDNAVVVAAQLANRYITNRFMPDKAIDLIDEACANVRVQLSSRPEAIDILERKKRQLEIEAKALERDKEAASRERLKLVKADIQRVEEELQPLVSKYNDERQRIDELQEMQSRLDEKKKLERAVRDGKMDLAADLQYNVIPLIQDRIRSLKEDIERQKATLVQEKVTEGDVAAVVARWTGIPVVKLSQTDRERLLNLSMHLHRRVKGQDEAVERVADAIIRARAGLSRPNSPTASFLFLGPTGVGKTELVKAVAAELFDDEKHMVRIDMSEYMEQHSVSRLIGAPPGYIGHDEGGQLTEPVRRRPHAVVLFDEVEKAHPNVYNVLLQVLDDGRLTDSRGRTVDFSNTIIVMTSNLGSEHLLNPEETNESYEVLRENVLAAVRSYFRPELINRLDDIVVFRRLRTEDLRGVVDNLIAGVNERLKSSGFSVLLDDGVKDFILEHGHDANMGARPLRRWIEKNIVTEIGRMLIAKELPPNSTLRVSLPEGGNKLTFGVKRGLTSDEWE</sequence>
<accession>P31543</accession>
<accession>Q7KA51</accession>
<name>CLP_TRYBB</name>
<gene>
    <name type="primary">HSP100</name>
</gene>
<reference key="1">
    <citation type="journal article" date="1990" name="Proc. Natl. Acad. Sci. U.S.A.">
        <title>Conservation of the regulatory subunit for the Clp ATP-dependent protease in prokaryotes and eukaryotes.</title>
        <authorList>
            <person name="Gottesman S."/>
            <person name="Squires C."/>
            <person name="Pichersky E."/>
            <person name="Carrington M."/>
            <person name="Hobbs M."/>
            <person name="Mattick J.S."/>
            <person name="Dalrymple B."/>
            <person name="Kuramitsu H."/>
            <person name="Shiroza T."/>
            <person name="Foster T."/>
            <person name="Clark W.P."/>
            <person name="Ross B."/>
            <person name="Squires C.L."/>
            <person name="Maurizi M.R."/>
        </authorList>
    </citation>
    <scope>NUCLEOTIDE SEQUENCE [GENOMIC DNA]</scope>
</reference>
<reference key="2">
    <citation type="journal article" date="1998" name="Mol. Biochem. Parasitol.">
        <title>Conservation of genetic linkage between heat shock protein 100 and glycosylphosphatidylinositol-specific phospholipase C in Trypanosoma brucei and Trypanosoma cruzi.</title>
        <authorList>
            <person name="Redpath M.B."/>
            <person name="Carnall N."/>
            <person name="Webb H."/>
            <person name="Courel M."/>
            <person name="Amorim A."/>
            <person name="Guther M.L.S."/>
            <person name="Cardoso de Almeida M.L."/>
            <person name="Carrington M."/>
        </authorList>
    </citation>
    <scope>NUCLEOTIDE SEQUENCE [GENOMIC DNA]</scope>
    <source>
        <strain>STIB 367H / ILTAR1</strain>
    </source>
</reference>
<reference key="3">
    <citation type="journal article" date="2001" name="Mol. Biochem. Parasitol.">
        <title>The coatomer of Trypanosoma brucei.</title>
        <authorList>
            <person name="Maier A.G."/>
            <person name="Webb H."/>
            <person name="Ding M."/>
            <person name="Bremser M."/>
            <person name="Carrington M."/>
            <person name="Clayton C."/>
        </authorList>
    </citation>
    <scope>NUCLEOTIDE SEQUENCE [GENOMIC DNA]</scope>
</reference>
<protein>
    <recommendedName>
        <fullName>Heat shock protein 100</fullName>
    </recommendedName>
    <alternativeName>
        <fullName>Protein CLP</fullName>
    </alternativeName>
</protein>
<keyword id="KW-0067">ATP-binding</keyword>
<keyword id="KW-0143">Chaperone</keyword>
<keyword id="KW-0547">Nucleotide-binding</keyword>
<keyword id="KW-0677">Repeat</keyword>
<proteinExistence type="inferred from homology"/>
<comment type="similarity">
    <text evidence="3">Belongs to the ClpA/ClpB family.</text>
</comment>
<organism>
    <name type="scientific">Trypanosoma brucei brucei</name>
    <dbReference type="NCBI Taxonomy" id="5702"/>
    <lineage>
        <taxon>Eukaryota</taxon>
        <taxon>Discoba</taxon>
        <taxon>Euglenozoa</taxon>
        <taxon>Kinetoplastea</taxon>
        <taxon>Metakinetoplastina</taxon>
        <taxon>Trypanosomatida</taxon>
        <taxon>Trypanosomatidae</taxon>
        <taxon>Trypanosoma</taxon>
    </lineage>
</organism>
<evidence type="ECO:0000255" key="1"/>
<evidence type="ECO:0000255" key="2">
    <source>
        <dbReference type="PROSITE-ProRule" id="PRU01251"/>
    </source>
</evidence>
<evidence type="ECO:0000305" key="3"/>